<keyword id="KW-0067">ATP-binding</keyword>
<keyword id="KW-0131">Cell cycle</keyword>
<keyword id="KW-0132">Cell division</keyword>
<keyword id="KW-0133">Cell shape</keyword>
<keyword id="KW-0961">Cell wall biogenesis/degradation</keyword>
<keyword id="KW-0963">Cytoplasm</keyword>
<keyword id="KW-0436">Ligase</keyword>
<keyword id="KW-0547">Nucleotide-binding</keyword>
<keyword id="KW-0573">Peptidoglycan synthesis</keyword>
<gene>
    <name evidence="1" type="primary">murD</name>
    <name type="ordered locus">CPn_0901</name>
    <name type="ordered locus">CP_0965</name>
    <name type="ordered locus">CpB0933</name>
</gene>
<protein>
    <recommendedName>
        <fullName evidence="1">UDP-N-acetylmuramoylalanine--D-glutamate ligase</fullName>
        <ecNumber evidence="1">6.3.2.9</ecNumber>
    </recommendedName>
    <alternativeName>
        <fullName evidence="1">D-glutamic acid-adding enzyme</fullName>
    </alternativeName>
    <alternativeName>
        <fullName evidence="1">UDP-N-acetylmuramoyl-L-alanyl-D-glutamate synthetase</fullName>
    </alternativeName>
</protein>
<accession>Q9Z705</accession>
<accession>Q9JS92</accession>
<dbReference type="EC" id="6.3.2.9" evidence="1"/>
<dbReference type="EMBL" id="AE001363">
    <property type="protein sequence ID" value="AAD19039.1"/>
    <property type="molecule type" value="Genomic_DNA"/>
</dbReference>
<dbReference type="EMBL" id="AE002161">
    <property type="protein sequence ID" value="AAF38745.1"/>
    <property type="molecule type" value="Genomic_DNA"/>
</dbReference>
<dbReference type="EMBL" id="BA000008">
    <property type="protein sequence ID" value="BAA99109.1"/>
    <property type="molecule type" value="Genomic_DNA"/>
</dbReference>
<dbReference type="EMBL" id="AE009440">
    <property type="protein sequence ID" value="AAP98862.1"/>
    <property type="molecule type" value="Genomic_DNA"/>
</dbReference>
<dbReference type="PIR" id="C86603">
    <property type="entry name" value="C86603"/>
</dbReference>
<dbReference type="PIR" id="H72021">
    <property type="entry name" value="H72021"/>
</dbReference>
<dbReference type="RefSeq" id="NP_225096.1">
    <property type="nucleotide sequence ID" value="NC_000922.1"/>
</dbReference>
<dbReference type="RefSeq" id="WP_010883536.1">
    <property type="nucleotide sequence ID" value="NZ_LN847257.1"/>
</dbReference>
<dbReference type="SMR" id="Q9Z705"/>
<dbReference type="STRING" id="406984.CPK_ORF00313"/>
<dbReference type="GeneID" id="45050957"/>
<dbReference type="KEGG" id="cpa:CP_0965"/>
<dbReference type="KEGG" id="cpj:murD"/>
<dbReference type="KEGG" id="cpn:CPn_0901"/>
<dbReference type="KEGG" id="cpt:CpB0933"/>
<dbReference type="PATRIC" id="fig|115713.3.peg.982"/>
<dbReference type="eggNOG" id="COG0771">
    <property type="taxonomic scope" value="Bacteria"/>
</dbReference>
<dbReference type="HOGENOM" id="CLU_032540_0_0_0"/>
<dbReference type="OrthoDB" id="9809796at2"/>
<dbReference type="UniPathway" id="UPA00219"/>
<dbReference type="Proteomes" id="UP000000583">
    <property type="component" value="Chromosome"/>
</dbReference>
<dbReference type="Proteomes" id="UP000000801">
    <property type="component" value="Chromosome"/>
</dbReference>
<dbReference type="GO" id="GO:0005737">
    <property type="term" value="C:cytoplasm"/>
    <property type="evidence" value="ECO:0007669"/>
    <property type="project" value="UniProtKB-SubCell"/>
</dbReference>
<dbReference type="GO" id="GO:0005524">
    <property type="term" value="F:ATP binding"/>
    <property type="evidence" value="ECO:0007669"/>
    <property type="project" value="UniProtKB-UniRule"/>
</dbReference>
<dbReference type="GO" id="GO:0008764">
    <property type="term" value="F:UDP-N-acetylmuramoylalanine-D-glutamate ligase activity"/>
    <property type="evidence" value="ECO:0007669"/>
    <property type="project" value="UniProtKB-UniRule"/>
</dbReference>
<dbReference type="GO" id="GO:0051301">
    <property type="term" value="P:cell division"/>
    <property type="evidence" value="ECO:0007669"/>
    <property type="project" value="UniProtKB-KW"/>
</dbReference>
<dbReference type="GO" id="GO:0071555">
    <property type="term" value="P:cell wall organization"/>
    <property type="evidence" value="ECO:0007669"/>
    <property type="project" value="UniProtKB-KW"/>
</dbReference>
<dbReference type="GO" id="GO:0009252">
    <property type="term" value="P:peptidoglycan biosynthetic process"/>
    <property type="evidence" value="ECO:0007669"/>
    <property type="project" value="UniProtKB-UniRule"/>
</dbReference>
<dbReference type="GO" id="GO:0008360">
    <property type="term" value="P:regulation of cell shape"/>
    <property type="evidence" value="ECO:0007669"/>
    <property type="project" value="UniProtKB-KW"/>
</dbReference>
<dbReference type="Gene3D" id="3.90.190.20">
    <property type="entry name" value="Mur ligase, C-terminal domain"/>
    <property type="match status" value="1"/>
</dbReference>
<dbReference type="Gene3D" id="3.40.1190.10">
    <property type="entry name" value="Mur-like, catalytic domain"/>
    <property type="match status" value="1"/>
</dbReference>
<dbReference type="Gene3D" id="3.40.50.720">
    <property type="entry name" value="NAD(P)-binding Rossmann-like Domain"/>
    <property type="match status" value="1"/>
</dbReference>
<dbReference type="HAMAP" id="MF_00639">
    <property type="entry name" value="MurD"/>
    <property type="match status" value="1"/>
</dbReference>
<dbReference type="InterPro" id="IPR036565">
    <property type="entry name" value="Mur-like_cat_sf"/>
</dbReference>
<dbReference type="InterPro" id="IPR004101">
    <property type="entry name" value="Mur_ligase_C"/>
</dbReference>
<dbReference type="InterPro" id="IPR036615">
    <property type="entry name" value="Mur_ligase_C_dom_sf"/>
</dbReference>
<dbReference type="InterPro" id="IPR013221">
    <property type="entry name" value="Mur_ligase_cen"/>
</dbReference>
<dbReference type="InterPro" id="IPR005762">
    <property type="entry name" value="MurD"/>
</dbReference>
<dbReference type="NCBIfam" id="TIGR01087">
    <property type="entry name" value="murD"/>
    <property type="match status" value="1"/>
</dbReference>
<dbReference type="PANTHER" id="PTHR43692">
    <property type="entry name" value="UDP-N-ACETYLMURAMOYLALANINE--D-GLUTAMATE LIGASE"/>
    <property type="match status" value="1"/>
</dbReference>
<dbReference type="PANTHER" id="PTHR43692:SF1">
    <property type="entry name" value="UDP-N-ACETYLMURAMOYLALANINE--D-GLUTAMATE LIGASE"/>
    <property type="match status" value="1"/>
</dbReference>
<dbReference type="Pfam" id="PF02875">
    <property type="entry name" value="Mur_ligase_C"/>
    <property type="match status" value="1"/>
</dbReference>
<dbReference type="Pfam" id="PF08245">
    <property type="entry name" value="Mur_ligase_M"/>
    <property type="match status" value="1"/>
</dbReference>
<dbReference type="Pfam" id="PF21799">
    <property type="entry name" value="MurD-like_N"/>
    <property type="match status" value="1"/>
</dbReference>
<dbReference type="SUPFAM" id="SSF51984">
    <property type="entry name" value="MurCD N-terminal domain"/>
    <property type="match status" value="1"/>
</dbReference>
<dbReference type="SUPFAM" id="SSF53623">
    <property type="entry name" value="MurD-like peptide ligases, catalytic domain"/>
    <property type="match status" value="1"/>
</dbReference>
<dbReference type="SUPFAM" id="SSF53244">
    <property type="entry name" value="MurD-like peptide ligases, peptide-binding domain"/>
    <property type="match status" value="1"/>
</dbReference>
<organism>
    <name type="scientific">Chlamydia pneumoniae</name>
    <name type="common">Chlamydophila pneumoniae</name>
    <dbReference type="NCBI Taxonomy" id="83558"/>
    <lineage>
        <taxon>Bacteria</taxon>
        <taxon>Pseudomonadati</taxon>
        <taxon>Chlamydiota</taxon>
        <taxon>Chlamydiia</taxon>
        <taxon>Chlamydiales</taxon>
        <taxon>Chlamydiaceae</taxon>
        <taxon>Chlamydia/Chlamydophila group</taxon>
        <taxon>Chlamydia</taxon>
    </lineage>
</organism>
<proteinExistence type="inferred from homology"/>
<evidence type="ECO:0000255" key="1">
    <source>
        <dbReference type="HAMAP-Rule" id="MF_00639"/>
    </source>
</evidence>
<evidence type="ECO:0000305" key="2"/>
<reference key="1">
    <citation type="journal article" date="1999" name="Nat. Genet.">
        <title>Comparative genomes of Chlamydia pneumoniae and C. trachomatis.</title>
        <authorList>
            <person name="Kalman S."/>
            <person name="Mitchell W.P."/>
            <person name="Marathe R."/>
            <person name="Lammel C.J."/>
            <person name="Fan J."/>
            <person name="Hyman R.W."/>
            <person name="Olinger L."/>
            <person name="Grimwood J."/>
            <person name="Davis R.W."/>
            <person name="Stephens R.S."/>
        </authorList>
    </citation>
    <scope>NUCLEOTIDE SEQUENCE [LARGE SCALE GENOMIC DNA]</scope>
    <source>
        <strain>CWL029</strain>
    </source>
</reference>
<reference key="2">
    <citation type="journal article" date="2000" name="Nucleic Acids Res.">
        <title>Genome sequences of Chlamydia trachomatis MoPn and Chlamydia pneumoniae AR39.</title>
        <authorList>
            <person name="Read T.D."/>
            <person name="Brunham R.C."/>
            <person name="Shen C."/>
            <person name="Gill S.R."/>
            <person name="Heidelberg J.F."/>
            <person name="White O."/>
            <person name="Hickey E.K."/>
            <person name="Peterson J.D."/>
            <person name="Utterback T.R."/>
            <person name="Berry K.J."/>
            <person name="Bass S."/>
            <person name="Linher K.D."/>
            <person name="Weidman J.F."/>
            <person name="Khouri H.M."/>
            <person name="Craven B."/>
            <person name="Bowman C."/>
            <person name="Dodson R.J."/>
            <person name="Gwinn M.L."/>
            <person name="Nelson W.C."/>
            <person name="DeBoy R.T."/>
            <person name="Kolonay J.F."/>
            <person name="McClarty G."/>
            <person name="Salzberg S.L."/>
            <person name="Eisen J.A."/>
            <person name="Fraser C.M."/>
        </authorList>
    </citation>
    <scope>NUCLEOTIDE SEQUENCE [LARGE SCALE GENOMIC DNA]</scope>
    <source>
        <strain>AR39</strain>
    </source>
</reference>
<reference key="3">
    <citation type="journal article" date="2000" name="Nucleic Acids Res.">
        <title>Comparison of whole genome sequences of Chlamydia pneumoniae J138 from Japan and CWL029 from USA.</title>
        <authorList>
            <person name="Shirai M."/>
            <person name="Hirakawa H."/>
            <person name="Kimoto M."/>
            <person name="Tabuchi M."/>
            <person name="Kishi F."/>
            <person name="Ouchi K."/>
            <person name="Shiba T."/>
            <person name="Ishii K."/>
            <person name="Hattori M."/>
            <person name="Kuhara S."/>
            <person name="Nakazawa T."/>
        </authorList>
    </citation>
    <scope>NUCLEOTIDE SEQUENCE [LARGE SCALE GENOMIC DNA]</scope>
    <source>
        <strain>J138</strain>
    </source>
</reference>
<reference key="4">
    <citation type="submission" date="2002-05" db="EMBL/GenBank/DDBJ databases">
        <title>The genome sequence of Chlamydia pneumoniae TW183 and comparison with other Chlamydia strains based on whole genome sequence analysis.</title>
        <authorList>
            <person name="Geng M.M."/>
            <person name="Schuhmacher A."/>
            <person name="Muehldorfer I."/>
            <person name="Bensch K.W."/>
            <person name="Schaefer K.P."/>
            <person name="Schneider S."/>
            <person name="Pohl T."/>
            <person name="Essig A."/>
            <person name="Marre R."/>
            <person name="Melchers K."/>
        </authorList>
    </citation>
    <scope>NUCLEOTIDE SEQUENCE [LARGE SCALE GENOMIC DNA]</scope>
    <source>
        <strain>TW-183</strain>
    </source>
</reference>
<comment type="function">
    <text evidence="1">Cell wall formation. Catalyzes the addition of glutamate to the nucleotide precursor UDP-N-acetylmuramoyl-L-alanine (UMA).</text>
</comment>
<comment type="catalytic activity">
    <reaction evidence="1">
        <text>UDP-N-acetyl-alpha-D-muramoyl-L-alanine + D-glutamate + ATP = UDP-N-acetyl-alpha-D-muramoyl-L-alanyl-D-glutamate + ADP + phosphate + H(+)</text>
        <dbReference type="Rhea" id="RHEA:16429"/>
        <dbReference type="ChEBI" id="CHEBI:15378"/>
        <dbReference type="ChEBI" id="CHEBI:29986"/>
        <dbReference type="ChEBI" id="CHEBI:30616"/>
        <dbReference type="ChEBI" id="CHEBI:43474"/>
        <dbReference type="ChEBI" id="CHEBI:83898"/>
        <dbReference type="ChEBI" id="CHEBI:83900"/>
        <dbReference type="ChEBI" id="CHEBI:456216"/>
        <dbReference type="EC" id="6.3.2.9"/>
    </reaction>
</comment>
<comment type="pathway">
    <text evidence="1">Cell wall biogenesis; peptidoglycan biosynthesis.</text>
</comment>
<comment type="subcellular location">
    <subcellularLocation>
        <location evidence="1">Cytoplasm</location>
    </subcellularLocation>
</comment>
<comment type="similarity">
    <text evidence="1">Belongs to the MurCDEF family.</text>
</comment>
<sequence>MCQRILILGTGITGKSVARFLYQQGHYLIGADNSLESLISVDHLHDRLLMGASEFPENIDLVIRSPGIKPYHPWVEQAVSLKIPVVTDIQVALKTPEFQRYPSFGITGSNGKTTTTLFLTHLLNTLGIPAIAMGNIGLPILDHMGQPGVRVVEISSFQLATQEEHIPALSGSVFLNFSRNHLDYHRNLDAYFDAKLRIQKCLRQDKTFWVWEECSLGNSYQIYSEEIEEILDKGDALKPIYLHDRDNYCAAYALANEVGWVSPEGFLKAIRTFEKPAHRLEYLGKKDGVHYINDSKATTVTAVEKALMAVGKDVIVILGGKDKGGDFPALASVLSQTTKHVIAMGECRQTIADALSEKIPLTLSKDLQEAVSIAQTIAQEGDTVLLSPGCASFDQFQSFKERGAYFKLLIREMQAVR</sequence>
<name>MURD_CHLPN</name>
<feature type="chain" id="PRO_0000108993" description="UDP-N-acetylmuramoylalanine--D-glutamate ligase">
    <location>
        <begin position="1"/>
        <end position="417"/>
    </location>
</feature>
<feature type="binding site" evidence="1">
    <location>
        <begin position="108"/>
        <end position="114"/>
    </location>
    <ligand>
        <name>ATP</name>
        <dbReference type="ChEBI" id="CHEBI:30616"/>
    </ligand>
</feature>
<feature type="sequence conflict" description="In Ref. 3; BAA99109." evidence="2" ref="3">
    <original>I</original>
    <variation>V</variation>
    <location>
        <position position="166"/>
    </location>
</feature>